<accession>Q6P8J2</accession>
<accession>Q5F299</accession>
<evidence type="ECO:0000250" key="1">
    <source>
        <dbReference type="UniProtKB" id="P0A951"/>
    </source>
</evidence>
<evidence type="ECO:0000250" key="2">
    <source>
        <dbReference type="UniProtKB" id="P21673"/>
    </source>
</evidence>
<evidence type="ECO:0000250" key="3">
    <source>
        <dbReference type="UniProtKB" id="Q96F10"/>
    </source>
</evidence>
<evidence type="ECO:0000255" key="4">
    <source>
        <dbReference type="PROSITE-ProRule" id="PRU00532"/>
    </source>
</evidence>
<evidence type="ECO:0000305" key="5"/>
<evidence type="ECO:0000312" key="6">
    <source>
        <dbReference type="MGI" id="MGI:1916465"/>
    </source>
</evidence>
<evidence type="ECO:0007744" key="7">
    <source>
    </source>
</evidence>
<comment type="function">
    <text evidence="3">Catalyzes the N-acetylation of the amino acid thialysine (S-(2-aminoethyl)-L-cysteine), a L-lysine analog with the 4-methylene group substituted with a sulfur. May also catalyze acetylation of polyamines, such as norspermidine, spermidine or spermine. However, ability to acetylate polyamines is weak, suggesting that it does not act as a diamine acetyltransferase in vivo.</text>
</comment>
<comment type="catalytic activity">
    <reaction evidence="3">
        <text>S-(2-aminoethyl)-L-cysteine + acetyl-CoA = S-(2-acetamidoethyl)-L-cysteine + CoA + H(+)</text>
        <dbReference type="Rhea" id="RHEA:64804"/>
        <dbReference type="ChEBI" id="CHEBI:15378"/>
        <dbReference type="ChEBI" id="CHEBI:57287"/>
        <dbReference type="ChEBI" id="CHEBI:57288"/>
        <dbReference type="ChEBI" id="CHEBI:156132"/>
        <dbReference type="ChEBI" id="CHEBI:156134"/>
    </reaction>
    <physiologicalReaction direction="left-to-right" evidence="3">
        <dbReference type="Rhea" id="RHEA:64805"/>
    </physiologicalReaction>
</comment>
<comment type="catalytic activity">
    <reaction evidence="3">
        <text>an alkane-alpha,omega-diamine + acetyl-CoA = an N-acetylalkane-alpha,omega-diamine + CoA + H(+)</text>
        <dbReference type="Rhea" id="RHEA:11116"/>
        <dbReference type="Rhea" id="RHEA-COMP:9766"/>
        <dbReference type="Rhea" id="RHEA-COMP:9767"/>
        <dbReference type="ChEBI" id="CHEBI:15378"/>
        <dbReference type="ChEBI" id="CHEBI:57287"/>
        <dbReference type="ChEBI" id="CHEBI:57288"/>
        <dbReference type="ChEBI" id="CHEBI:70977"/>
        <dbReference type="ChEBI" id="CHEBI:70988"/>
        <dbReference type="EC" id="2.3.1.57"/>
    </reaction>
</comment>
<comment type="subunit">
    <text evidence="3">Homodimer.</text>
</comment>
<comment type="subcellular location">
    <subcellularLocation>
        <location evidence="3">Cytoplasm</location>
    </subcellularLocation>
    <text evidence="3">Intracellular organelles.</text>
</comment>
<comment type="similarity">
    <text evidence="5">Belongs to the acetyltransferase family.</text>
</comment>
<proteinExistence type="evidence at protein level"/>
<feature type="chain" id="PRO_0000074599" description="Thialysine N-epsilon-acetyltransferase">
    <location>
        <begin position="1"/>
        <end position="170"/>
    </location>
</feature>
<feature type="domain" description="N-acetyltransferase" evidence="4">
    <location>
        <begin position="4"/>
        <end position="166"/>
    </location>
</feature>
<feature type="active site" description="Proton donor" evidence="1">
    <location>
        <position position="140"/>
    </location>
</feature>
<feature type="binding site" evidence="2">
    <location>
        <begin position="27"/>
        <end position="28"/>
    </location>
    <ligand>
        <name>substrate</name>
    </ligand>
</feature>
<feature type="binding site" evidence="2">
    <location>
        <position position="92"/>
    </location>
    <ligand>
        <name>substrate</name>
    </ligand>
</feature>
<feature type="binding site" evidence="3">
    <location>
        <begin position="94"/>
        <end position="96"/>
    </location>
    <ligand>
        <name>acetyl-CoA</name>
        <dbReference type="ChEBI" id="CHEBI:57288"/>
    </ligand>
</feature>
<feature type="binding site" evidence="3">
    <location>
        <begin position="102"/>
        <end position="107"/>
    </location>
    <ligand>
        <name>acetyl-CoA</name>
        <dbReference type="ChEBI" id="CHEBI:57288"/>
    </ligand>
</feature>
<feature type="binding site" evidence="3">
    <location>
        <begin position="133"/>
        <end position="135"/>
    </location>
    <ligand>
        <name>acetyl-CoA</name>
        <dbReference type="ChEBI" id="CHEBI:57288"/>
    </ligand>
</feature>
<feature type="binding site" evidence="3">
    <location>
        <position position="140"/>
    </location>
    <ligand>
        <name>acetyl-CoA</name>
        <dbReference type="ChEBI" id="CHEBI:57288"/>
    </ligand>
</feature>
<feature type="binding site" evidence="2">
    <location>
        <position position="152"/>
    </location>
    <ligand>
        <name>substrate</name>
    </ligand>
</feature>
<feature type="modified residue" description="N6-acetyllysine" evidence="7">
    <location>
        <position position="29"/>
    </location>
</feature>
<name>SAT2_MOUSE</name>
<organism>
    <name type="scientific">Mus musculus</name>
    <name type="common">Mouse</name>
    <dbReference type="NCBI Taxonomy" id="10090"/>
    <lineage>
        <taxon>Eukaryota</taxon>
        <taxon>Metazoa</taxon>
        <taxon>Chordata</taxon>
        <taxon>Craniata</taxon>
        <taxon>Vertebrata</taxon>
        <taxon>Euteleostomi</taxon>
        <taxon>Mammalia</taxon>
        <taxon>Eutheria</taxon>
        <taxon>Euarchontoglires</taxon>
        <taxon>Glires</taxon>
        <taxon>Rodentia</taxon>
        <taxon>Myomorpha</taxon>
        <taxon>Muroidea</taxon>
        <taxon>Muridae</taxon>
        <taxon>Murinae</taxon>
        <taxon>Mus</taxon>
        <taxon>Mus</taxon>
    </lineage>
</organism>
<sequence length="170" mass="19305">MASTRIREARESDCGDIMRMIRELAEFEKLSHQVKISEEALRADGFGENPFFHCLVAEIIPAPGESQGSLVVGYGLYYFIYSTWTGRNVYLEDIYVMPQYRGQGIGTKIIKKVAEVALNKGCSQFRLAVLDWNKKAVNLYKFLGAQDLTESEGWLSFRFEGEAMRELAGR</sequence>
<protein>
    <recommendedName>
        <fullName evidence="5">Thialysine N-epsilon-acetyltransferase</fullName>
        <ecNumber evidence="3">2.3.1.-</ecNumber>
    </recommendedName>
    <alternativeName>
        <fullName evidence="3">Diamine acetyltransferase 2</fullName>
        <ecNumber evidence="3">2.3.1.57</ecNumber>
    </alternativeName>
    <alternativeName>
        <fullName evidence="3">Spermidine/spermine N(1)-acetyltransferase 2</fullName>
        <shortName evidence="3">SSAT-2</shortName>
    </alternativeName>
</protein>
<gene>
    <name evidence="6" type="primary">Sat2</name>
    <name evidence="3" type="synonym">Ssat2</name>
</gene>
<dbReference type="EC" id="2.3.1.-" evidence="3"/>
<dbReference type="EC" id="2.3.1.57" evidence="3"/>
<dbReference type="EMBL" id="AL603707">
    <property type="status" value="NOT_ANNOTATED_CDS"/>
    <property type="molecule type" value="Genomic_DNA"/>
</dbReference>
<dbReference type="EMBL" id="AL731687">
    <property type="status" value="NOT_ANNOTATED_CDS"/>
    <property type="molecule type" value="Genomic_DNA"/>
</dbReference>
<dbReference type="EMBL" id="BC061227">
    <property type="protein sequence ID" value="AAH61227.1"/>
    <property type="molecule type" value="mRNA"/>
</dbReference>
<dbReference type="CCDS" id="CCDS36194.1"/>
<dbReference type="RefSeq" id="NP_001343397.1">
    <property type="nucleotide sequence ID" value="NM_001356468.1"/>
</dbReference>
<dbReference type="RefSeq" id="NP_081267.1">
    <property type="nucleotide sequence ID" value="NM_026991.3"/>
</dbReference>
<dbReference type="RefSeq" id="XP_006534175.1">
    <property type="nucleotide sequence ID" value="XM_006534112.3"/>
</dbReference>
<dbReference type="SMR" id="Q6P8J2"/>
<dbReference type="BioGRID" id="213297">
    <property type="interactions" value="2"/>
</dbReference>
<dbReference type="FunCoup" id="Q6P8J2">
    <property type="interactions" value="230"/>
</dbReference>
<dbReference type="STRING" id="10090.ENSMUSP00000104296"/>
<dbReference type="ChEMBL" id="CHEMBL3794"/>
<dbReference type="iPTMnet" id="Q6P8J2"/>
<dbReference type="PhosphoSitePlus" id="Q6P8J2"/>
<dbReference type="SwissPalm" id="Q6P8J2"/>
<dbReference type="jPOST" id="Q6P8J2"/>
<dbReference type="PaxDb" id="10090-ENSMUSP00000104296"/>
<dbReference type="ProteomicsDB" id="253398"/>
<dbReference type="Pumba" id="Q6P8J2"/>
<dbReference type="Antibodypedia" id="12120">
    <property type="antibodies" value="156 antibodies from 22 providers"/>
</dbReference>
<dbReference type="Ensembl" id="ENSMUST00000092969.2">
    <property type="protein sequence ID" value="ENSMUSP00000090647.2"/>
    <property type="gene ID" value="ENSMUSG00000069835.11"/>
</dbReference>
<dbReference type="Ensembl" id="ENSMUST00000108656.9">
    <property type="protein sequence ID" value="ENSMUSP00000104296.3"/>
    <property type="gene ID" value="ENSMUSG00000069835.11"/>
</dbReference>
<dbReference type="GeneID" id="69215"/>
<dbReference type="KEGG" id="mmu:69215"/>
<dbReference type="UCSC" id="uc007jqq.1">
    <property type="organism name" value="mouse"/>
</dbReference>
<dbReference type="AGR" id="MGI:1916465"/>
<dbReference type="CTD" id="112483"/>
<dbReference type="MGI" id="MGI:1916465">
    <property type="gene designation" value="Sat2"/>
</dbReference>
<dbReference type="VEuPathDB" id="HostDB:ENSMUSG00000069835"/>
<dbReference type="eggNOG" id="KOG3216">
    <property type="taxonomic scope" value="Eukaryota"/>
</dbReference>
<dbReference type="GeneTree" id="ENSGT00950000183121"/>
<dbReference type="HOGENOM" id="CLU_013985_41_1_1"/>
<dbReference type="InParanoid" id="Q6P8J2"/>
<dbReference type="OMA" id="QSEWVRY"/>
<dbReference type="OrthoDB" id="7305308at2759"/>
<dbReference type="PhylomeDB" id="Q6P8J2"/>
<dbReference type="TreeFam" id="TF319736"/>
<dbReference type="BioGRID-ORCS" id="69215">
    <property type="hits" value="2 hits in 75 CRISPR screens"/>
</dbReference>
<dbReference type="ChiTaRS" id="Sat2">
    <property type="organism name" value="mouse"/>
</dbReference>
<dbReference type="PRO" id="PR:Q6P8J2"/>
<dbReference type="Proteomes" id="UP000000589">
    <property type="component" value="Chromosome 11"/>
</dbReference>
<dbReference type="RNAct" id="Q6P8J2">
    <property type="molecule type" value="protein"/>
</dbReference>
<dbReference type="Bgee" id="ENSMUSG00000069835">
    <property type="expression patterns" value="Expressed in otolith organ and 203 other cell types or tissues"/>
</dbReference>
<dbReference type="ExpressionAtlas" id="Q6P8J2">
    <property type="expression patterns" value="baseline and differential"/>
</dbReference>
<dbReference type="GO" id="GO:0005737">
    <property type="term" value="C:cytoplasm"/>
    <property type="evidence" value="ECO:0007669"/>
    <property type="project" value="UniProtKB-SubCell"/>
</dbReference>
<dbReference type="GO" id="GO:0004145">
    <property type="term" value="F:diamine N-acetyltransferase activity"/>
    <property type="evidence" value="ECO:0000247"/>
    <property type="project" value="MGI"/>
</dbReference>
<dbReference type="GO" id="GO:0042802">
    <property type="term" value="F:identical protein binding"/>
    <property type="evidence" value="ECO:0007669"/>
    <property type="project" value="Ensembl"/>
</dbReference>
<dbReference type="GO" id="GO:0008080">
    <property type="term" value="F:N-acetyltransferase activity"/>
    <property type="evidence" value="ECO:0000250"/>
    <property type="project" value="UniProtKB"/>
</dbReference>
<dbReference type="GO" id="GO:0046204">
    <property type="term" value="P:nor-spermidine metabolic process"/>
    <property type="evidence" value="ECO:0007669"/>
    <property type="project" value="Ensembl"/>
</dbReference>
<dbReference type="GO" id="GO:0032920">
    <property type="term" value="P:putrescine acetylation"/>
    <property type="evidence" value="ECO:0007669"/>
    <property type="project" value="Ensembl"/>
</dbReference>
<dbReference type="GO" id="GO:0008216">
    <property type="term" value="P:spermidine metabolic process"/>
    <property type="evidence" value="ECO:0000247"/>
    <property type="project" value="MGI"/>
</dbReference>
<dbReference type="GO" id="GO:0032919">
    <property type="term" value="P:spermine acetylation"/>
    <property type="evidence" value="ECO:0007669"/>
    <property type="project" value="Ensembl"/>
</dbReference>
<dbReference type="GO" id="GO:0008215">
    <property type="term" value="P:spermine metabolic process"/>
    <property type="evidence" value="ECO:0000247"/>
    <property type="project" value="MGI"/>
</dbReference>
<dbReference type="CDD" id="cd04301">
    <property type="entry name" value="NAT_SF"/>
    <property type="match status" value="1"/>
</dbReference>
<dbReference type="FunFam" id="3.40.630.30:FF:000011">
    <property type="entry name" value="Diamine acetyltransferase 1"/>
    <property type="match status" value="1"/>
</dbReference>
<dbReference type="Gene3D" id="3.40.630.30">
    <property type="match status" value="1"/>
</dbReference>
<dbReference type="InterPro" id="IPR016181">
    <property type="entry name" value="Acyl_CoA_acyltransferase"/>
</dbReference>
<dbReference type="InterPro" id="IPR051016">
    <property type="entry name" value="Diverse_Substrate_AcTransf"/>
</dbReference>
<dbReference type="InterPro" id="IPR000182">
    <property type="entry name" value="GNAT_dom"/>
</dbReference>
<dbReference type="PANTHER" id="PTHR10545">
    <property type="entry name" value="DIAMINE N-ACETYLTRANSFERASE"/>
    <property type="match status" value="1"/>
</dbReference>
<dbReference type="PANTHER" id="PTHR10545:SF51">
    <property type="entry name" value="THIALYSINE N-EPSILON-ACETYLTRANSFERASE"/>
    <property type="match status" value="1"/>
</dbReference>
<dbReference type="Pfam" id="PF00583">
    <property type="entry name" value="Acetyltransf_1"/>
    <property type="match status" value="1"/>
</dbReference>
<dbReference type="SUPFAM" id="SSF55729">
    <property type="entry name" value="Acyl-CoA N-acyltransferases (Nat)"/>
    <property type="match status" value="1"/>
</dbReference>
<dbReference type="PROSITE" id="PS51186">
    <property type="entry name" value="GNAT"/>
    <property type="match status" value="1"/>
</dbReference>
<reference key="1">
    <citation type="journal article" date="2009" name="PLoS Biol.">
        <title>Lineage-specific biology revealed by a finished genome assembly of the mouse.</title>
        <authorList>
            <person name="Church D.M."/>
            <person name="Goodstadt L."/>
            <person name="Hillier L.W."/>
            <person name="Zody M.C."/>
            <person name="Goldstein S."/>
            <person name="She X."/>
            <person name="Bult C.J."/>
            <person name="Agarwala R."/>
            <person name="Cherry J.L."/>
            <person name="DiCuccio M."/>
            <person name="Hlavina W."/>
            <person name="Kapustin Y."/>
            <person name="Meric P."/>
            <person name="Maglott D."/>
            <person name="Birtle Z."/>
            <person name="Marques A.C."/>
            <person name="Graves T."/>
            <person name="Zhou S."/>
            <person name="Teague B."/>
            <person name="Potamousis K."/>
            <person name="Churas C."/>
            <person name="Place M."/>
            <person name="Herschleb J."/>
            <person name="Runnheim R."/>
            <person name="Forrest D."/>
            <person name="Amos-Landgraf J."/>
            <person name="Schwartz D.C."/>
            <person name="Cheng Z."/>
            <person name="Lindblad-Toh K."/>
            <person name="Eichler E.E."/>
            <person name="Ponting C.P."/>
        </authorList>
    </citation>
    <scope>NUCLEOTIDE SEQUENCE [LARGE SCALE GENOMIC DNA]</scope>
    <source>
        <strain>C57BL/6J</strain>
    </source>
</reference>
<reference key="2">
    <citation type="journal article" date="2004" name="Genome Res.">
        <title>The status, quality, and expansion of the NIH full-length cDNA project: the Mammalian Gene Collection (MGC).</title>
        <authorList>
            <consortium name="The MGC Project Team"/>
        </authorList>
    </citation>
    <scope>NUCLEOTIDE SEQUENCE [LARGE SCALE MRNA]</scope>
    <source>
        <tissue>Kidney</tissue>
    </source>
</reference>
<reference key="3">
    <citation type="journal article" date="2010" name="Cell">
        <title>A tissue-specific atlas of mouse protein phosphorylation and expression.</title>
        <authorList>
            <person name="Huttlin E.L."/>
            <person name="Jedrychowski M.P."/>
            <person name="Elias J.E."/>
            <person name="Goswami T."/>
            <person name="Rad R."/>
            <person name="Beausoleil S.A."/>
            <person name="Villen J."/>
            <person name="Haas W."/>
            <person name="Sowa M.E."/>
            <person name="Gygi S.P."/>
        </authorList>
    </citation>
    <scope>IDENTIFICATION BY MASS SPECTROMETRY [LARGE SCALE ANALYSIS]</scope>
    <source>
        <tissue>Brain</tissue>
        <tissue>Heart</tissue>
        <tissue>Kidney</tissue>
        <tissue>Liver</tissue>
        <tissue>Spleen</tissue>
        <tissue>Testis</tissue>
    </source>
</reference>
<reference key="4">
    <citation type="journal article" date="2013" name="Mol. Cell">
        <title>SIRT5-mediated lysine desuccinylation impacts diverse metabolic pathways.</title>
        <authorList>
            <person name="Park J."/>
            <person name="Chen Y."/>
            <person name="Tishkoff D.X."/>
            <person name="Peng C."/>
            <person name="Tan M."/>
            <person name="Dai L."/>
            <person name="Xie Z."/>
            <person name="Zhang Y."/>
            <person name="Zwaans B.M."/>
            <person name="Skinner M.E."/>
            <person name="Lombard D.B."/>
            <person name="Zhao Y."/>
        </authorList>
    </citation>
    <scope>ACETYLATION [LARGE SCALE ANALYSIS] AT LYS-29</scope>
    <scope>IDENTIFICATION BY MASS SPECTROMETRY [LARGE SCALE ANALYSIS]</scope>
    <source>
        <tissue>Embryonic fibroblast</tissue>
    </source>
</reference>
<keyword id="KW-0007">Acetylation</keyword>
<keyword id="KW-0012">Acyltransferase</keyword>
<keyword id="KW-0963">Cytoplasm</keyword>
<keyword id="KW-1185">Reference proteome</keyword>
<keyword id="KW-0808">Transferase</keyword>